<protein>
    <recommendedName>
        <fullName evidence="2">Transaldolase</fullName>
        <ecNumber evidence="2">2.2.1.2</ecNumber>
    </recommendedName>
</protein>
<sequence length="317" mass="34728">MSNQLQALRDITTVVADTGDIEAIKKYQPVDATTNPSLLLKAAEMEQYRSHLENAVAWAKEQSDDADQQIIDAGDKLAVTIGTDIVNIVPGRISTEVDARLSFDTQASIEKAHKLIALYKEAGIDKSRILIKLASTWEGIKAAEHLEKEGINCNLTLLFSFAQAQACAEAGAYLISPFVGRILDWYKAKTGKTEYAASEDPGVQSVTKIYNYYKEHGYKTVVMGASFRNIGEITELAGCDRLTISPGLLEELSNSDAPLEVKLKDTGATTTPGKPLDEAAFRWEMNQDAMATEKLSEGIRNFAADQVKLETLLKSYV</sequence>
<keyword id="KW-0963">Cytoplasm</keyword>
<keyword id="KW-0570">Pentose shunt</keyword>
<keyword id="KW-0704">Schiff base</keyword>
<keyword id="KW-0808">Transferase</keyword>
<name>TAL_PSEA6</name>
<evidence type="ECO:0000250" key="1"/>
<evidence type="ECO:0000255" key="2">
    <source>
        <dbReference type="HAMAP-Rule" id="MF_00492"/>
    </source>
</evidence>
<feature type="chain" id="PRO_1000014510" description="Transaldolase">
    <location>
        <begin position="1"/>
        <end position="317"/>
    </location>
</feature>
<feature type="active site" description="Schiff-base intermediate with substrate" evidence="2">
    <location>
        <position position="132"/>
    </location>
</feature>
<gene>
    <name evidence="2" type="primary">tal</name>
    <name type="ordered locus">Patl_3622</name>
</gene>
<comment type="function">
    <text evidence="2">Transaldolase is important for the balance of metabolites in the pentose-phosphate pathway.</text>
</comment>
<comment type="catalytic activity">
    <reaction evidence="2">
        <text>D-sedoheptulose 7-phosphate + D-glyceraldehyde 3-phosphate = D-erythrose 4-phosphate + beta-D-fructose 6-phosphate</text>
        <dbReference type="Rhea" id="RHEA:17053"/>
        <dbReference type="ChEBI" id="CHEBI:16897"/>
        <dbReference type="ChEBI" id="CHEBI:57483"/>
        <dbReference type="ChEBI" id="CHEBI:57634"/>
        <dbReference type="ChEBI" id="CHEBI:59776"/>
        <dbReference type="EC" id="2.2.1.2"/>
    </reaction>
</comment>
<comment type="pathway">
    <text evidence="2">Carbohydrate degradation; pentose phosphate pathway; D-glyceraldehyde 3-phosphate and beta-D-fructose 6-phosphate from D-ribose 5-phosphate and D-xylulose 5-phosphate (non-oxidative stage): step 2/3.</text>
</comment>
<comment type="subunit">
    <text evidence="1">Homodimer.</text>
</comment>
<comment type="subcellular location">
    <subcellularLocation>
        <location evidence="2">Cytoplasm</location>
    </subcellularLocation>
</comment>
<comment type="similarity">
    <text evidence="2">Belongs to the transaldolase family. Type 1 subfamily.</text>
</comment>
<dbReference type="EC" id="2.2.1.2" evidence="2"/>
<dbReference type="EMBL" id="CP000388">
    <property type="protein sequence ID" value="ABG42124.1"/>
    <property type="molecule type" value="Genomic_DNA"/>
</dbReference>
<dbReference type="RefSeq" id="WP_011576348.1">
    <property type="nucleotide sequence ID" value="NC_008228.1"/>
</dbReference>
<dbReference type="SMR" id="Q15PR4"/>
<dbReference type="STRING" id="342610.Patl_3622"/>
<dbReference type="KEGG" id="pat:Patl_3622"/>
<dbReference type="eggNOG" id="COG0176">
    <property type="taxonomic scope" value="Bacteria"/>
</dbReference>
<dbReference type="HOGENOM" id="CLU_047470_0_1_6"/>
<dbReference type="OrthoDB" id="9809101at2"/>
<dbReference type="UniPathway" id="UPA00115">
    <property type="reaction ID" value="UER00414"/>
</dbReference>
<dbReference type="Proteomes" id="UP000001981">
    <property type="component" value="Chromosome"/>
</dbReference>
<dbReference type="GO" id="GO:0005829">
    <property type="term" value="C:cytosol"/>
    <property type="evidence" value="ECO:0007669"/>
    <property type="project" value="TreeGrafter"/>
</dbReference>
<dbReference type="GO" id="GO:0004801">
    <property type="term" value="F:transaldolase activity"/>
    <property type="evidence" value="ECO:0000250"/>
    <property type="project" value="UniProtKB"/>
</dbReference>
<dbReference type="GO" id="GO:0005975">
    <property type="term" value="P:carbohydrate metabolic process"/>
    <property type="evidence" value="ECO:0007669"/>
    <property type="project" value="InterPro"/>
</dbReference>
<dbReference type="GO" id="GO:0006098">
    <property type="term" value="P:pentose-phosphate shunt"/>
    <property type="evidence" value="ECO:0007669"/>
    <property type="project" value="UniProtKB-UniRule"/>
</dbReference>
<dbReference type="CDD" id="cd00957">
    <property type="entry name" value="Transaldolase_TalAB"/>
    <property type="match status" value="1"/>
</dbReference>
<dbReference type="FunFam" id="3.20.20.70:FF:000002">
    <property type="entry name" value="Transaldolase"/>
    <property type="match status" value="1"/>
</dbReference>
<dbReference type="Gene3D" id="3.20.20.70">
    <property type="entry name" value="Aldolase class I"/>
    <property type="match status" value="1"/>
</dbReference>
<dbReference type="HAMAP" id="MF_00492">
    <property type="entry name" value="Transaldolase_1"/>
    <property type="match status" value="1"/>
</dbReference>
<dbReference type="InterPro" id="IPR013785">
    <property type="entry name" value="Aldolase_TIM"/>
</dbReference>
<dbReference type="InterPro" id="IPR001585">
    <property type="entry name" value="TAL/FSA"/>
</dbReference>
<dbReference type="InterPro" id="IPR004730">
    <property type="entry name" value="Transaldolase_1"/>
</dbReference>
<dbReference type="InterPro" id="IPR018225">
    <property type="entry name" value="Transaldolase_AS"/>
</dbReference>
<dbReference type="NCBIfam" id="NF009001">
    <property type="entry name" value="PRK12346.1"/>
    <property type="match status" value="1"/>
</dbReference>
<dbReference type="NCBIfam" id="TIGR00874">
    <property type="entry name" value="talAB"/>
    <property type="match status" value="1"/>
</dbReference>
<dbReference type="PANTHER" id="PTHR10683">
    <property type="entry name" value="TRANSALDOLASE"/>
    <property type="match status" value="1"/>
</dbReference>
<dbReference type="PANTHER" id="PTHR10683:SF18">
    <property type="entry name" value="TRANSALDOLASE"/>
    <property type="match status" value="1"/>
</dbReference>
<dbReference type="Pfam" id="PF00923">
    <property type="entry name" value="TAL_FSA"/>
    <property type="match status" value="1"/>
</dbReference>
<dbReference type="SUPFAM" id="SSF51569">
    <property type="entry name" value="Aldolase"/>
    <property type="match status" value="1"/>
</dbReference>
<dbReference type="PROSITE" id="PS01054">
    <property type="entry name" value="TRANSALDOLASE_1"/>
    <property type="match status" value="1"/>
</dbReference>
<dbReference type="PROSITE" id="PS00958">
    <property type="entry name" value="TRANSALDOLASE_2"/>
    <property type="match status" value="1"/>
</dbReference>
<reference key="1">
    <citation type="submission" date="2006-06" db="EMBL/GenBank/DDBJ databases">
        <title>Complete sequence of Pseudoalteromonas atlantica T6c.</title>
        <authorList>
            <consortium name="US DOE Joint Genome Institute"/>
            <person name="Copeland A."/>
            <person name="Lucas S."/>
            <person name="Lapidus A."/>
            <person name="Barry K."/>
            <person name="Detter J.C."/>
            <person name="Glavina del Rio T."/>
            <person name="Hammon N."/>
            <person name="Israni S."/>
            <person name="Dalin E."/>
            <person name="Tice H."/>
            <person name="Pitluck S."/>
            <person name="Saunders E."/>
            <person name="Brettin T."/>
            <person name="Bruce D."/>
            <person name="Han C."/>
            <person name="Tapia R."/>
            <person name="Gilna P."/>
            <person name="Schmutz J."/>
            <person name="Larimer F."/>
            <person name="Land M."/>
            <person name="Hauser L."/>
            <person name="Kyrpides N."/>
            <person name="Kim E."/>
            <person name="Karls A.C."/>
            <person name="Bartlett D."/>
            <person name="Higgins B.P."/>
            <person name="Richardson P."/>
        </authorList>
    </citation>
    <scope>NUCLEOTIDE SEQUENCE [LARGE SCALE GENOMIC DNA]</scope>
    <source>
        <strain>T6c / ATCC BAA-1087</strain>
    </source>
</reference>
<accession>Q15PR4</accession>
<organism>
    <name type="scientific">Pseudoalteromonas atlantica (strain T6c / ATCC BAA-1087)</name>
    <dbReference type="NCBI Taxonomy" id="3042615"/>
    <lineage>
        <taxon>Bacteria</taxon>
        <taxon>Pseudomonadati</taxon>
        <taxon>Pseudomonadota</taxon>
        <taxon>Gammaproteobacteria</taxon>
        <taxon>Alteromonadales</taxon>
        <taxon>Alteromonadaceae</taxon>
        <taxon>Paraglaciecola</taxon>
    </lineage>
</organism>
<proteinExistence type="inferred from homology"/>